<organism>
    <name type="scientific">Drosophila melanogaster</name>
    <name type="common">Fruit fly</name>
    <dbReference type="NCBI Taxonomy" id="7227"/>
    <lineage>
        <taxon>Eukaryota</taxon>
        <taxon>Metazoa</taxon>
        <taxon>Ecdysozoa</taxon>
        <taxon>Arthropoda</taxon>
        <taxon>Hexapoda</taxon>
        <taxon>Insecta</taxon>
        <taxon>Pterygota</taxon>
        <taxon>Neoptera</taxon>
        <taxon>Endopterygota</taxon>
        <taxon>Diptera</taxon>
        <taxon>Brachycera</taxon>
        <taxon>Muscomorpha</taxon>
        <taxon>Ephydroidea</taxon>
        <taxon>Drosophilidae</taxon>
        <taxon>Drosophila</taxon>
        <taxon>Sophophora</taxon>
    </lineage>
</organism>
<keyword id="KW-0025">Alternative splicing</keyword>
<keyword id="KW-0217">Developmental protein</keyword>
<keyword id="KW-0221">Differentiation</keyword>
<keyword id="KW-0524">Neurogenesis</keyword>
<keyword id="KW-0539">Nucleus</keyword>
<keyword id="KW-0597">Phosphoprotein</keyword>
<keyword id="KW-1185">Reference proteome</keyword>
<keyword id="KW-0677">Repeat</keyword>
<keyword id="KW-0678">Repressor</keyword>
<keyword id="KW-0804">Transcription</keyword>
<keyword id="KW-0805">Transcription regulation</keyword>
<keyword id="KW-0832">Ubl conjugation</keyword>
<keyword id="KW-0853">WD repeat</keyword>
<keyword id="KW-0879">Wnt signaling pathway</keyword>
<sequence length="730" mass="80231">MYPSPVRHPAAGGPPPQGPIKFTIADTLERIKEEFNFLQAQYHSIKLECEKLSNEKTEMQRHYVMYYEMSYGLNVEMHKQTEIAKRLNTLINQLLPFLQADHQQQVLQAVERAKQVTMQELNLIIGHQQQHGIQQLLQQIHAQQVPGGPPQPMGALNPFGALGATMGLPHGPQGLLNKPPEHHRPDIKPTGLEGPAAAEERLRNSVSPADREKYRTRSPLDIENDSKRRKDEKLQEDEGEKSDQDLVVDVANEMESHSPRPNGEHVSMEVRDRESLNGERLEKPSSSGIKQERPPSRSGSSSSRSTPSLKTKDMEKPGTPGAKARTPTPNAAAPAPGVNPKQMMPQGPPPAGYPGAPYQRPADPYQRPPSDPAYGRPPPMPYDPHAHVRTNGIPHPSALTGGKPAYSFHMNGEGSLQPVPFPPDALVGVGIPRHARQINTLSHGEVVCAVTISNPTKYVYTGGKGCVKVWDISQPGNKNPVSQLDCLQRDNYIRSVKLLPDGRTLIVGGEASNLSIWDLASPTPRIKAELTSAAPACYALAISPDSKVCFSCCSDGNIAVWDLHNEILVRQFQGHTDGASCIDISPDGSRLWTGGLDNTVRSWDLREGRQLQQHDFSSQIFSLGYCPTGDWLAVGMENSHVEVLHASKPDKYQLHLHESCVLSLRFAACGKWFVSTGKDNLLNAWRTPYGASIFQSKETSSVLSCDISTDDKYIVTGSGDKKATVYEVIY</sequence>
<proteinExistence type="evidence at protein level"/>
<evidence type="ECO:0000255" key="1"/>
<evidence type="ECO:0000256" key="2">
    <source>
        <dbReference type="SAM" id="MobiDB-lite"/>
    </source>
</evidence>
<evidence type="ECO:0000269" key="3">
    <source>
    </source>
</evidence>
<evidence type="ECO:0000269" key="4">
    <source>
    </source>
</evidence>
<evidence type="ECO:0000269" key="5">
    <source>
    </source>
</evidence>
<evidence type="ECO:0000269" key="6">
    <source>
    </source>
</evidence>
<evidence type="ECO:0000269" key="7">
    <source>
    </source>
</evidence>
<evidence type="ECO:0000303" key="8">
    <source>
    </source>
</evidence>
<evidence type="ECO:0000303" key="9">
    <source>
    </source>
</evidence>
<evidence type="ECO:0000305" key="10"/>
<comment type="function">
    <text evidence="6 7">Transcriptional corepressor that regulates transcription when recruited to specific target DNA by hairy-related bHLH proteins (PubMed:8001118, PubMed:8649374). Maternally required for neurogenesis; in the segregation of the neuroectoderm (PubMed:8001118). Directly or indirectly interacts with Notch and Delta (PubMed:8001118).</text>
</comment>
<comment type="subunit">
    <text evidence="6 7">Forms a complex with the hairy/Enhancer of split/deadpan family of basic helix-loop-helix proteins in order to repress transcription (PubMed:8001118, PubMed:8649374). Its activity in regulating transcription depends on other proteins as it lacks a DNA-binding motif (PubMed:8001118, PubMed:8649374). Interacts with hairy/hry (via WRPW motif) (PubMed:8649374).</text>
</comment>
<comment type="interaction">
    <interactant intactId="EBI-153866">
        <id>P16371</id>
    </interactant>
    <interactant intactId="EBI-121622">
        <id>Q01068</id>
        <label>E(spl)m3-HLH</label>
    </interactant>
    <organismsDiffer>false</organismsDiffer>
    <experiments>4</experiments>
</comment>
<comment type="interaction">
    <interactant intactId="EBI-153866">
        <id>P16371</id>
    </interactant>
    <interactant intactId="EBI-104760">
        <id>P13096</id>
        <label>E(spl)m5-HLH</label>
    </interactant>
    <organismsDiffer>false</organismsDiffer>
    <experiments>3</experiments>
</comment>
<comment type="interaction">
    <interactant intactId="EBI-153866">
        <id>P16371</id>
    </interactant>
    <interactant intactId="EBI-185388">
        <id>P13098</id>
        <label>E(spl)m8-HLH</label>
    </interactant>
    <organismsDiffer>false</organismsDiffer>
    <experiments>4</experiments>
</comment>
<comment type="interaction">
    <interactant intactId="EBI-153866">
        <id>P16371</id>
    </interactant>
    <interactant intactId="EBI-118907">
        <id>Q01071</id>
        <label>E(spl)mdelta-HLH</label>
    </interactant>
    <organismsDiffer>false</organismsDiffer>
    <experiments>4</experiments>
</comment>
<comment type="interaction">
    <interactant intactId="EBI-153866">
        <id>P16371</id>
    </interactant>
    <interactant intactId="EBI-123011">
        <id>P14003</id>
        <label>hry</label>
    </interactant>
    <organismsDiffer>false</organismsDiffer>
    <experiments>6</experiments>
</comment>
<comment type="interaction">
    <interactant intactId="EBI-153866">
        <id>P16371</id>
    </interactant>
    <interactant intactId="EBI-170297">
        <id>P10734</id>
        <label>kni</label>
    </interactant>
    <organismsDiffer>false</organismsDiffer>
    <experiments>5</experiments>
</comment>
<comment type="interaction">
    <interactant intactId="EBI-153866">
        <id>P16371</id>
    </interactant>
    <interactant intactId="EBI-120162">
        <id>Q9W4S7</id>
        <label>Myc</label>
    </interactant>
    <organismsDiffer>false</organismsDiffer>
    <experiments>3</experiments>
</comment>
<comment type="interaction">
    <interactant intactId="EBI-153866">
        <id>P16371</id>
    </interactant>
    <interactant intactId="EBI-147301">
        <id>P91943</id>
        <label>pan</label>
    </interactant>
    <organismsDiffer>false</organismsDiffer>
    <experiments>2</experiments>
</comment>
<comment type="interaction">
    <interactant intactId="EBI-153866">
        <id>P16371</id>
    </interactant>
    <interactant intactId="EBI-7461944">
        <id>Q9GRA9</id>
        <label>sbb</label>
    </interactant>
    <organismsDiffer>false</organismsDiffer>
    <experiments>2</experiments>
</comment>
<comment type="interaction">
    <interactant intactId="EBI-153866">
        <id>P16371</id>
    </interactant>
    <interactant intactId="EBI-114439">
        <id>O97102</id>
        <label>Sumo</label>
    </interactant>
    <organismsDiffer>false</organismsDiffer>
    <experiments>2</experiments>
</comment>
<comment type="interaction">
    <interactant intactId="EBI-153866">
        <id>P16371</id>
    </interactant>
    <interactant intactId="EBI-925940">
        <id>Q01196-1</id>
        <label>RUNX1</label>
    </interactant>
    <organismsDiffer>true</organismsDiffer>
    <experiments>4</experiments>
</comment>
<comment type="interaction">
    <interactant intactId="EBI-153866">
        <id>P16371</id>
    </interactant>
    <interactant intactId="EBI-2297327">
        <id>Q62233</id>
        <label>Six3</label>
    </interactant>
    <organismsDiffer>true</organismsDiffer>
    <experiments>2</experiments>
</comment>
<comment type="interaction">
    <interactant intactId="EBI-15661898">
        <id>P16371-2</id>
    </interactant>
    <interactant intactId="EBI-123011">
        <id>P14003</id>
        <label>hry</label>
    </interactant>
    <organismsDiffer>false</organismsDiffer>
    <experiments>2</experiments>
</comment>
<comment type="interaction">
    <interactant intactId="EBI-15661898">
        <id>P16371-2</id>
    </interactant>
    <interactant intactId="EBI-120162">
        <id>Q9W4S7</id>
        <label>Myc</label>
    </interactant>
    <organismsDiffer>false</organismsDiffer>
    <experiments>3</experiments>
</comment>
<comment type="subcellular location">
    <subcellularLocation>
        <location>Nucleus</location>
    </subcellularLocation>
</comment>
<comment type="alternative products">
    <event type="alternative splicing"/>
    <isoform>
        <id>P16371-1</id>
        <name>E</name>
        <sequence type="displayed"/>
    </isoform>
    <isoform>
        <id>P16371-2</id>
        <name>A</name>
        <name>B</name>
        <sequence type="described" ref="VSP_022308"/>
    </isoform>
</comment>
<comment type="developmental stage">
    <text evidence="6">Expressed both maternally and zygotically.</text>
</comment>
<comment type="PTM">
    <text evidence="4 5">Ubiquitinated by XIAP/BIRC4 (PubMed:22304967). Ubiquitinated by hyd in response to Wnt signaling, leading to degradation by the proteasome (PubMed:28689657).</text>
</comment>
<comment type="similarity">
    <text evidence="10">Belongs to the WD repeat Groucho/TLE family.</text>
</comment>
<dbReference type="EMBL" id="M20571">
    <property type="protein sequence ID" value="AAA28512.1"/>
    <property type="molecule type" value="mRNA"/>
</dbReference>
<dbReference type="EMBL" id="AE014297">
    <property type="protein sequence ID" value="AAF56557.1"/>
    <property type="molecule type" value="Genomic_DNA"/>
</dbReference>
<dbReference type="EMBL" id="AE014297">
    <property type="protein sequence ID" value="AAN14068.1"/>
    <property type="molecule type" value="Genomic_DNA"/>
</dbReference>
<dbReference type="EMBL" id="AE014297">
    <property type="protein sequence ID" value="AAN14069.1"/>
    <property type="molecule type" value="Genomic_DNA"/>
</dbReference>
<dbReference type="EMBL" id="AE014297">
    <property type="protein sequence ID" value="AAS65218.1"/>
    <property type="molecule type" value="Genomic_DNA"/>
</dbReference>
<dbReference type="EMBL" id="AF145695">
    <property type="protein sequence ID" value="AAD38670.1"/>
    <property type="molecule type" value="mRNA"/>
</dbReference>
<dbReference type="PIR" id="A30047">
    <property type="entry name" value="A30047"/>
</dbReference>
<dbReference type="RefSeq" id="NP_001189293.1">
    <molecule id="P16371-2"/>
    <property type="nucleotide sequence ID" value="NM_001202364.1"/>
</dbReference>
<dbReference type="RefSeq" id="NP_524514.2">
    <molecule id="P16371-2"/>
    <property type="nucleotide sequence ID" value="NM_079790.5"/>
</dbReference>
<dbReference type="RefSeq" id="NP_733133.1">
    <molecule id="P16371-2"/>
    <property type="nucleotide sequence ID" value="NM_170254.3"/>
</dbReference>
<dbReference type="RefSeq" id="NP_733134.1">
    <molecule id="P16371-2"/>
    <property type="nucleotide sequence ID" value="NM_170255.4"/>
</dbReference>
<dbReference type="RefSeq" id="NP_733135.1">
    <molecule id="P16371-2"/>
    <property type="nucleotide sequence ID" value="NM_170256.2"/>
</dbReference>
<dbReference type="RefSeq" id="NP_996298.1">
    <molecule id="P16371-1"/>
    <property type="nucleotide sequence ID" value="NM_206575.3"/>
</dbReference>
<dbReference type="SMR" id="P16371"/>
<dbReference type="BioGRID" id="68062">
    <property type="interactions" value="89"/>
</dbReference>
<dbReference type="DIP" id="DIP-40N"/>
<dbReference type="ELM" id="P16371"/>
<dbReference type="FunCoup" id="P16371">
    <property type="interactions" value="973"/>
</dbReference>
<dbReference type="IntAct" id="P16371">
    <property type="interactions" value="41"/>
</dbReference>
<dbReference type="MINT" id="P16371"/>
<dbReference type="STRING" id="7227.FBpp0089115"/>
<dbReference type="GlyGen" id="P16371">
    <property type="glycosylation" value="1 site"/>
</dbReference>
<dbReference type="iPTMnet" id="P16371"/>
<dbReference type="PaxDb" id="7227-FBpp0089115"/>
<dbReference type="EnsemblMetazoa" id="FBtr0084962">
    <molecule id="P16371-2"/>
    <property type="protein sequence ID" value="FBpp0084336"/>
    <property type="gene ID" value="FBgn0001139"/>
</dbReference>
<dbReference type="EnsemblMetazoa" id="FBtr0084963">
    <molecule id="P16371-2"/>
    <property type="protein sequence ID" value="FBpp0084337"/>
    <property type="gene ID" value="FBgn0001139"/>
</dbReference>
<dbReference type="EnsemblMetazoa" id="FBtr0084964">
    <molecule id="P16371-2"/>
    <property type="protein sequence ID" value="FBpp0084338"/>
    <property type="gene ID" value="FBgn0001139"/>
</dbReference>
<dbReference type="EnsemblMetazoa" id="FBtr0084965">
    <molecule id="P16371-2"/>
    <property type="protein sequence ID" value="FBpp0084339"/>
    <property type="gene ID" value="FBgn0001139"/>
</dbReference>
<dbReference type="EnsemblMetazoa" id="FBtr0084966">
    <molecule id="P16371-1"/>
    <property type="protein sequence ID" value="FBpp0089115"/>
    <property type="gene ID" value="FBgn0001139"/>
</dbReference>
<dbReference type="EnsemblMetazoa" id="FBtr0302951">
    <molecule id="P16371-2"/>
    <property type="protein sequence ID" value="FBpp0292077"/>
    <property type="gene ID" value="FBgn0001139"/>
</dbReference>
<dbReference type="GeneID" id="43162"/>
<dbReference type="KEGG" id="dme:Dmel_CG8384"/>
<dbReference type="UCSC" id="CG8384-RA">
    <property type="organism name" value="d. melanogaster"/>
</dbReference>
<dbReference type="AGR" id="FB:FBgn0001139"/>
<dbReference type="CTD" id="43162"/>
<dbReference type="FlyBase" id="FBgn0001139">
    <property type="gene designation" value="gro"/>
</dbReference>
<dbReference type="VEuPathDB" id="VectorBase:FBgn0001139"/>
<dbReference type="eggNOG" id="KOG0639">
    <property type="taxonomic scope" value="Eukaryota"/>
</dbReference>
<dbReference type="GeneTree" id="ENSGT01030000234519"/>
<dbReference type="InParanoid" id="P16371"/>
<dbReference type="OMA" id="QLICPLI"/>
<dbReference type="OrthoDB" id="2624652at2759"/>
<dbReference type="PhylomeDB" id="P16371"/>
<dbReference type="Reactome" id="R-DME-201722">
    <property type="pathway name" value="Formation of the beta-catenin:TCF transactivating complex"/>
</dbReference>
<dbReference type="Reactome" id="R-DME-209421">
    <property type="pathway name" value="Transcription activation by ARM"/>
</dbReference>
<dbReference type="Reactome" id="R-DME-209441">
    <property type="pathway name" value="WG ligand not bound to FZ receptors"/>
</dbReference>
<dbReference type="Reactome" id="R-DME-3769402">
    <property type="pathway name" value="Deactivation of the beta-catenin transactivating complex"/>
</dbReference>
<dbReference type="Reactome" id="R-DME-4641265">
    <property type="pathway name" value="Repression of WNT target genes"/>
</dbReference>
<dbReference type="SignaLink" id="P16371"/>
<dbReference type="BioGRID-ORCS" id="43162">
    <property type="hits" value="1 hit in 3 CRISPR screens"/>
</dbReference>
<dbReference type="ChiTaRS" id="gro">
    <property type="organism name" value="fly"/>
</dbReference>
<dbReference type="GenomeRNAi" id="43162"/>
<dbReference type="PRO" id="PR:P16371"/>
<dbReference type="Proteomes" id="UP000000803">
    <property type="component" value="Chromosome 3R"/>
</dbReference>
<dbReference type="Bgee" id="FBgn0001139">
    <property type="expression patterns" value="Expressed in spermatogonium in testis and 291 other cell types or tissues"/>
</dbReference>
<dbReference type="ExpressionAtlas" id="P16371">
    <property type="expression patterns" value="baseline and differential"/>
</dbReference>
<dbReference type="GO" id="GO:0005654">
    <property type="term" value="C:nucleoplasm"/>
    <property type="evidence" value="ECO:0000304"/>
    <property type="project" value="Reactome"/>
</dbReference>
<dbReference type="GO" id="GO:0005634">
    <property type="term" value="C:nucleus"/>
    <property type="evidence" value="ECO:0000318"/>
    <property type="project" value="GO_Central"/>
</dbReference>
<dbReference type="GO" id="GO:0032991">
    <property type="term" value="C:protein-containing complex"/>
    <property type="evidence" value="ECO:0000353"/>
    <property type="project" value="FlyBase"/>
</dbReference>
<dbReference type="GO" id="GO:0005667">
    <property type="term" value="C:transcription regulator complex"/>
    <property type="evidence" value="ECO:0000318"/>
    <property type="project" value="GO_Central"/>
</dbReference>
<dbReference type="GO" id="GO:0071906">
    <property type="term" value="F:CRD domain binding"/>
    <property type="evidence" value="ECO:0000353"/>
    <property type="project" value="UniProtKB"/>
</dbReference>
<dbReference type="GO" id="GO:0140297">
    <property type="term" value="F:DNA-binding transcription factor binding"/>
    <property type="evidence" value="ECO:0000315"/>
    <property type="project" value="FlyBase"/>
</dbReference>
<dbReference type="GO" id="GO:0071837">
    <property type="term" value="F:HMG box domain binding"/>
    <property type="evidence" value="ECO:0000353"/>
    <property type="project" value="UniProtKB"/>
</dbReference>
<dbReference type="GO" id="GO:0003714">
    <property type="term" value="F:transcription corepressor activity"/>
    <property type="evidence" value="ECO:0000314"/>
    <property type="project" value="UniProtKB"/>
</dbReference>
<dbReference type="GO" id="GO:0030154">
    <property type="term" value="P:cell differentiation"/>
    <property type="evidence" value="ECO:0007669"/>
    <property type="project" value="UniProtKB-KW"/>
</dbReference>
<dbReference type="GO" id="GO:0007173">
    <property type="term" value="P:epidermal growth factor receptor signaling pathway"/>
    <property type="evidence" value="ECO:0000315"/>
    <property type="project" value="FlyBase"/>
</dbReference>
<dbReference type="GO" id="GO:0008543">
    <property type="term" value="P:fibroblast growth factor receptor signaling pathway"/>
    <property type="evidence" value="ECO:0000270"/>
    <property type="project" value="FlyBase"/>
</dbReference>
<dbReference type="GO" id="GO:0090090">
    <property type="term" value="P:negative regulation of canonical Wnt signaling pathway"/>
    <property type="evidence" value="ECO:0000314"/>
    <property type="project" value="UniProtKB"/>
</dbReference>
<dbReference type="GO" id="GO:0045892">
    <property type="term" value="P:negative regulation of DNA-templated transcription"/>
    <property type="evidence" value="ECO:0000314"/>
    <property type="project" value="UniProtKB"/>
</dbReference>
<dbReference type="GO" id="GO:0045751">
    <property type="term" value="P:negative regulation of Toll signaling pathway"/>
    <property type="evidence" value="ECO:0000316"/>
    <property type="project" value="FlyBase"/>
</dbReference>
<dbReference type="GO" id="GO:0000122">
    <property type="term" value="P:negative regulation of transcription by RNA polymerase II"/>
    <property type="evidence" value="ECO:0000315"/>
    <property type="project" value="FlyBase"/>
</dbReference>
<dbReference type="GO" id="GO:0007399">
    <property type="term" value="P:nervous system development"/>
    <property type="evidence" value="ECO:0000315"/>
    <property type="project" value="FlyBase"/>
</dbReference>
<dbReference type="GO" id="GO:0006355">
    <property type="term" value="P:regulation of DNA-templated transcription"/>
    <property type="evidence" value="ECO:0000315"/>
    <property type="project" value="FlyBase"/>
</dbReference>
<dbReference type="GO" id="GO:0007541">
    <property type="term" value="P:sex determination, primary response to X:A ratio"/>
    <property type="evidence" value="ECO:0000304"/>
    <property type="project" value="FlyBase"/>
</dbReference>
<dbReference type="GO" id="GO:0008293">
    <property type="term" value="P:torso signaling pathway"/>
    <property type="evidence" value="ECO:0000315"/>
    <property type="project" value="FlyBase"/>
</dbReference>
<dbReference type="GO" id="GO:0016055">
    <property type="term" value="P:Wnt signaling pathway"/>
    <property type="evidence" value="ECO:0007669"/>
    <property type="project" value="UniProtKB-KW"/>
</dbReference>
<dbReference type="CDD" id="cd00200">
    <property type="entry name" value="WD40"/>
    <property type="match status" value="1"/>
</dbReference>
<dbReference type="FunFam" id="2.130.10.10:FF:000001">
    <property type="entry name" value="transducin-like enhancer protein 3 isoform X1"/>
    <property type="match status" value="1"/>
</dbReference>
<dbReference type="Gene3D" id="2.130.10.10">
    <property type="entry name" value="YVTN repeat-like/Quinoprotein amine dehydrogenase"/>
    <property type="match status" value="1"/>
</dbReference>
<dbReference type="InterPro" id="IPR005617">
    <property type="entry name" value="Groucho/TLE_N"/>
</dbReference>
<dbReference type="InterPro" id="IPR009146">
    <property type="entry name" value="Groucho_enhance"/>
</dbReference>
<dbReference type="InterPro" id="IPR015943">
    <property type="entry name" value="WD40/YVTN_repeat-like_dom_sf"/>
</dbReference>
<dbReference type="InterPro" id="IPR019775">
    <property type="entry name" value="WD40_repeat_CS"/>
</dbReference>
<dbReference type="InterPro" id="IPR036322">
    <property type="entry name" value="WD40_repeat_dom_sf"/>
</dbReference>
<dbReference type="InterPro" id="IPR001680">
    <property type="entry name" value="WD40_rpt"/>
</dbReference>
<dbReference type="PANTHER" id="PTHR10814:SF21">
    <property type="entry name" value="PROTEIN GROUCHO"/>
    <property type="match status" value="1"/>
</dbReference>
<dbReference type="PANTHER" id="PTHR10814">
    <property type="entry name" value="TRANSDUCIN-LIKE ENHANCER PROTEIN"/>
    <property type="match status" value="1"/>
</dbReference>
<dbReference type="Pfam" id="PF03920">
    <property type="entry name" value="TLE_N"/>
    <property type="match status" value="1"/>
</dbReference>
<dbReference type="Pfam" id="PF00400">
    <property type="entry name" value="WD40"/>
    <property type="match status" value="5"/>
</dbReference>
<dbReference type="PRINTS" id="PR01850">
    <property type="entry name" value="GROUCHOFAMLY"/>
</dbReference>
<dbReference type="SMART" id="SM00320">
    <property type="entry name" value="WD40"/>
    <property type="match status" value="7"/>
</dbReference>
<dbReference type="SUPFAM" id="SSF50978">
    <property type="entry name" value="WD40 repeat-like"/>
    <property type="match status" value="1"/>
</dbReference>
<dbReference type="PROSITE" id="PS00678">
    <property type="entry name" value="WD_REPEATS_1"/>
    <property type="match status" value="2"/>
</dbReference>
<dbReference type="PROSITE" id="PS50082">
    <property type="entry name" value="WD_REPEATS_2"/>
    <property type="match status" value="3"/>
</dbReference>
<dbReference type="PROSITE" id="PS50294">
    <property type="entry name" value="WD_REPEATS_REGION"/>
    <property type="match status" value="2"/>
</dbReference>
<feature type="chain" id="PRO_0000051010" description="Protein groucho">
    <location>
        <begin position="1"/>
        <end position="730"/>
    </location>
</feature>
<feature type="repeat" description="WD 1">
    <location>
        <begin position="442"/>
        <end position="480"/>
    </location>
</feature>
<feature type="repeat" description="WD 2">
    <location>
        <begin position="488"/>
        <end position="527"/>
    </location>
</feature>
<feature type="repeat" description="WD 3">
    <location>
        <begin position="532"/>
        <end position="571"/>
    </location>
</feature>
<feature type="repeat" description="WD 4">
    <location>
        <begin position="574"/>
        <end position="613"/>
    </location>
</feature>
<feature type="repeat" description="WD 5">
    <location>
        <begin position="615"/>
        <end position="654"/>
    </location>
</feature>
<feature type="repeat" description="WD 6">
    <location>
        <begin position="656"/>
        <end position="695"/>
    </location>
</feature>
<feature type="repeat" description="WD 7">
    <location>
        <begin position="697"/>
        <end position="730"/>
    </location>
</feature>
<feature type="region of interest" description="Disordered" evidence="2">
    <location>
        <begin position="144"/>
        <end position="411"/>
    </location>
</feature>
<feature type="region of interest" description="CCN domain">
    <location>
        <begin position="206"/>
        <end position="267"/>
    </location>
</feature>
<feature type="region of interest" description="Binding to basic helix-loop-helix domain">
    <location>
        <begin position="262"/>
        <end position="425"/>
    </location>
</feature>
<feature type="short sequence motif" description="Nuclear localization signal" evidence="1">
    <location>
        <begin position="227"/>
        <end position="230"/>
    </location>
</feature>
<feature type="compositionally biased region" description="Basic and acidic residues" evidence="2">
    <location>
        <begin position="198"/>
        <end position="233"/>
    </location>
</feature>
<feature type="compositionally biased region" description="Basic and acidic residues" evidence="2">
    <location>
        <begin position="254"/>
        <end position="283"/>
    </location>
</feature>
<feature type="compositionally biased region" description="Low complexity" evidence="2">
    <location>
        <begin position="296"/>
        <end position="308"/>
    </location>
</feature>
<feature type="compositionally biased region" description="Low complexity" evidence="2">
    <location>
        <begin position="322"/>
        <end position="345"/>
    </location>
</feature>
<feature type="compositionally biased region" description="Low complexity" evidence="2">
    <location>
        <begin position="353"/>
        <end position="362"/>
    </location>
</feature>
<feature type="compositionally biased region" description="Pro residues" evidence="2">
    <location>
        <begin position="366"/>
        <end position="382"/>
    </location>
</feature>
<feature type="modified residue" description="Phosphoserine" evidence="3">
    <location>
        <position position="205"/>
    </location>
</feature>
<feature type="modified residue" description="Phosphoserine" evidence="3">
    <location>
        <position position="207"/>
    </location>
</feature>
<feature type="modified residue" description="Phosphoserine" evidence="3">
    <location>
        <position position="218"/>
    </location>
</feature>
<feature type="modified residue" description="Phosphoserine; by CK2" evidence="1">
    <location>
        <position position="242"/>
    </location>
</feature>
<feature type="modified residue" description="Phosphoserine; by CDC2" evidence="1">
    <location>
        <position position="258"/>
    </location>
</feature>
<feature type="modified residue" description="Phosphoserine" evidence="3">
    <location>
        <position position="267"/>
    </location>
</feature>
<feature type="modified residue" description="Phosphothreonine" evidence="3">
    <location>
        <position position="326"/>
    </location>
</feature>
<feature type="modified residue" description="Phosphothreonine" evidence="3">
    <location>
        <position position="328"/>
    </location>
</feature>
<feature type="splice variant" id="VSP_022308" description="In isoform A." evidence="8 9">
    <location>
        <begin position="127"/>
        <end position="137"/>
    </location>
</feature>
<feature type="sequence conflict" description="In Ref. 1; AAA28512." evidence="10" ref="1">
    <original>Q</original>
    <variation>H</variation>
    <location>
        <position position="41"/>
    </location>
</feature>
<gene>
    <name type="primary">gro</name>
    <name type="synonym">E(spl)m9/m10</name>
    <name type="ORF">CG8384</name>
</gene>
<reference key="1">
    <citation type="journal article" date="1988" name="Cell">
        <title>A deduced gene product from the Drosophila neurogenic locus, enhancer of split, shows homology to mammalian G-protein beta subunit.</title>
        <authorList>
            <person name="Hartley D."/>
            <person name="Preiss A."/>
            <person name="Artavanis-Tsakonas S."/>
        </authorList>
    </citation>
    <scope>NUCLEOTIDE SEQUENCE [MRNA] (ISOFORM A)</scope>
</reference>
<reference key="2">
    <citation type="journal article" date="2000" name="Science">
        <title>The genome sequence of Drosophila melanogaster.</title>
        <authorList>
            <person name="Adams M.D."/>
            <person name="Celniker S.E."/>
            <person name="Holt R.A."/>
            <person name="Evans C.A."/>
            <person name="Gocayne J.D."/>
            <person name="Amanatides P.G."/>
            <person name="Scherer S.E."/>
            <person name="Li P.W."/>
            <person name="Hoskins R.A."/>
            <person name="Galle R.F."/>
            <person name="George R.A."/>
            <person name="Lewis S.E."/>
            <person name="Richards S."/>
            <person name="Ashburner M."/>
            <person name="Henderson S.N."/>
            <person name="Sutton G.G."/>
            <person name="Wortman J.R."/>
            <person name="Yandell M.D."/>
            <person name="Zhang Q."/>
            <person name="Chen L.X."/>
            <person name="Brandon R.C."/>
            <person name="Rogers Y.-H.C."/>
            <person name="Blazej R.G."/>
            <person name="Champe M."/>
            <person name="Pfeiffer B.D."/>
            <person name="Wan K.H."/>
            <person name="Doyle C."/>
            <person name="Baxter E.G."/>
            <person name="Helt G."/>
            <person name="Nelson C.R."/>
            <person name="Miklos G.L.G."/>
            <person name="Abril J.F."/>
            <person name="Agbayani A."/>
            <person name="An H.-J."/>
            <person name="Andrews-Pfannkoch C."/>
            <person name="Baldwin D."/>
            <person name="Ballew R.M."/>
            <person name="Basu A."/>
            <person name="Baxendale J."/>
            <person name="Bayraktaroglu L."/>
            <person name="Beasley E.M."/>
            <person name="Beeson K.Y."/>
            <person name="Benos P.V."/>
            <person name="Berman B.P."/>
            <person name="Bhandari D."/>
            <person name="Bolshakov S."/>
            <person name="Borkova D."/>
            <person name="Botchan M.R."/>
            <person name="Bouck J."/>
            <person name="Brokstein P."/>
            <person name="Brottier P."/>
            <person name="Burtis K.C."/>
            <person name="Busam D.A."/>
            <person name="Butler H."/>
            <person name="Cadieu E."/>
            <person name="Center A."/>
            <person name="Chandra I."/>
            <person name="Cherry J.M."/>
            <person name="Cawley S."/>
            <person name="Dahlke C."/>
            <person name="Davenport L.B."/>
            <person name="Davies P."/>
            <person name="de Pablos B."/>
            <person name="Delcher A."/>
            <person name="Deng Z."/>
            <person name="Mays A.D."/>
            <person name="Dew I."/>
            <person name="Dietz S.M."/>
            <person name="Dodson K."/>
            <person name="Doup L.E."/>
            <person name="Downes M."/>
            <person name="Dugan-Rocha S."/>
            <person name="Dunkov B.C."/>
            <person name="Dunn P."/>
            <person name="Durbin K.J."/>
            <person name="Evangelista C.C."/>
            <person name="Ferraz C."/>
            <person name="Ferriera S."/>
            <person name="Fleischmann W."/>
            <person name="Fosler C."/>
            <person name="Gabrielian A.E."/>
            <person name="Garg N.S."/>
            <person name="Gelbart W.M."/>
            <person name="Glasser K."/>
            <person name="Glodek A."/>
            <person name="Gong F."/>
            <person name="Gorrell J.H."/>
            <person name="Gu Z."/>
            <person name="Guan P."/>
            <person name="Harris M."/>
            <person name="Harris N.L."/>
            <person name="Harvey D.A."/>
            <person name="Heiman T.J."/>
            <person name="Hernandez J.R."/>
            <person name="Houck J."/>
            <person name="Hostin D."/>
            <person name="Houston K.A."/>
            <person name="Howland T.J."/>
            <person name="Wei M.-H."/>
            <person name="Ibegwam C."/>
            <person name="Jalali M."/>
            <person name="Kalush F."/>
            <person name="Karpen G.H."/>
            <person name="Ke Z."/>
            <person name="Kennison J.A."/>
            <person name="Ketchum K.A."/>
            <person name="Kimmel B.E."/>
            <person name="Kodira C.D."/>
            <person name="Kraft C.L."/>
            <person name="Kravitz S."/>
            <person name="Kulp D."/>
            <person name="Lai Z."/>
            <person name="Lasko P."/>
            <person name="Lei Y."/>
            <person name="Levitsky A.A."/>
            <person name="Li J.H."/>
            <person name="Li Z."/>
            <person name="Liang Y."/>
            <person name="Lin X."/>
            <person name="Liu X."/>
            <person name="Mattei B."/>
            <person name="McIntosh T.C."/>
            <person name="McLeod M.P."/>
            <person name="McPherson D."/>
            <person name="Merkulov G."/>
            <person name="Milshina N.V."/>
            <person name="Mobarry C."/>
            <person name="Morris J."/>
            <person name="Moshrefi A."/>
            <person name="Mount S.M."/>
            <person name="Moy M."/>
            <person name="Murphy B."/>
            <person name="Murphy L."/>
            <person name="Muzny D.M."/>
            <person name="Nelson D.L."/>
            <person name="Nelson D.R."/>
            <person name="Nelson K.A."/>
            <person name="Nixon K."/>
            <person name="Nusskern D.R."/>
            <person name="Pacleb J.M."/>
            <person name="Palazzolo M."/>
            <person name="Pittman G.S."/>
            <person name="Pan S."/>
            <person name="Pollard J."/>
            <person name="Puri V."/>
            <person name="Reese M.G."/>
            <person name="Reinert K."/>
            <person name="Remington K."/>
            <person name="Saunders R.D.C."/>
            <person name="Scheeler F."/>
            <person name="Shen H."/>
            <person name="Shue B.C."/>
            <person name="Siden-Kiamos I."/>
            <person name="Simpson M."/>
            <person name="Skupski M.P."/>
            <person name="Smith T.J."/>
            <person name="Spier E."/>
            <person name="Spradling A.C."/>
            <person name="Stapleton M."/>
            <person name="Strong R."/>
            <person name="Sun E."/>
            <person name="Svirskas R."/>
            <person name="Tector C."/>
            <person name="Turner R."/>
            <person name="Venter E."/>
            <person name="Wang A.H."/>
            <person name="Wang X."/>
            <person name="Wang Z.-Y."/>
            <person name="Wassarman D.A."/>
            <person name="Weinstock G.M."/>
            <person name="Weissenbach J."/>
            <person name="Williams S.M."/>
            <person name="Woodage T."/>
            <person name="Worley K.C."/>
            <person name="Wu D."/>
            <person name="Yang S."/>
            <person name="Yao Q.A."/>
            <person name="Ye J."/>
            <person name="Yeh R.-F."/>
            <person name="Zaveri J.S."/>
            <person name="Zhan M."/>
            <person name="Zhang G."/>
            <person name="Zhao Q."/>
            <person name="Zheng L."/>
            <person name="Zheng X.H."/>
            <person name="Zhong F.N."/>
            <person name="Zhong W."/>
            <person name="Zhou X."/>
            <person name="Zhu S.C."/>
            <person name="Zhu X."/>
            <person name="Smith H.O."/>
            <person name="Gibbs R.A."/>
            <person name="Myers E.W."/>
            <person name="Rubin G.M."/>
            <person name="Venter J.C."/>
        </authorList>
    </citation>
    <scope>NUCLEOTIDE SEQUENCE [LARGE SCALE GENOMIC DNA]</scope>
    <source>
        <strain>Berkeley</strain>
    </source>
</reference>
<reference key="3">
    <citation type="journal article" date="2002" name="Genome Biol.">
        <title>Annotation of the Drosophila melanogaster euchromatic genome: a systematic review.</title>
        <authorList>
            <person name="Misra S."/>
            <person name="Crosby M.A."/>
            <person name="Mungall C.J."/>
            <person name="Matthews B.B."/>
            <person name="Campbell K.S."/>
            <person name="Hradecky P."/>
            <person name="Huang Y."/>
            <person name="Kaminker J.S."/>
            <person name="Millburn G.H."/>
            <person name="Prochnik S.E."/>
            <person name="Smith C.D."/>
            <person name="Tupy J.L."/>
            <person name="Whitfield E.J."/>
            <person name="Bayraktaroglu L."/>
            <person name="Berman B.P."/>
            <person name="Bettencourt B.R."/>
            <person name="Celniker S.E."/>
            <person name="de Grey A.D.N.J."/>
            <person name="Drysdale R.A."/>
            <person name="Harris N.L."/>
            <person name="Richter J."/>
            <person name="Russo S."/>
            <person name="Schroeder A.J."/>
            <person name="Shu S.Q."/>
            <person name="Stapleton M."/>
            <person name="Yamada C."/>
            <person name="Ashburner M."/>
            <person name="Gelbart W.M."/>
            <person name="Rubin G.M."/>
            <person name="Lewis S.E."/>
        </authorList>
    </citation>
    <scope>GENOME REANNOTATION</scope>
    <scope>ALTERNATIVE SPLICING</scope>
    <source>
        <strain>Berkeley</strain>
    </source>
</reference>
<reference key="4">
    <citation type="journal article" date="2000" name="Science">
        <title>A Drosophila complementary DNA resource.</title>
        <authorList>
            <person name="Rubin G.M."/>
            <person name="Hong L."/>
            <person name="Brokstein P."/>
            <person name="Evans-Holm M."/>
            <person name="Frise E."/>
            <person name="Stapleton M."/>
            <person name="Harvey D.A."/>
        </authorList>
    </citation>
    <scope>NUCLEOTIDE SEQUENCE [LARGE SCALE MRNA] (ISOFORM A)</scope>
    <source>
        <strain>Berkeley</strain>
        <tissue>Embryo</tissue>
    </source>
</reference>
<reference key="5">
    <citation type="journal article" date="1994" name="Cell">
        <title>Groucho is required for Drosophila neurogenesis, segmentation, and sex determination and interacts directly with hairy-related bHLH proteins.</title>
        <authorList>
            <person name="Paroush Z."/>
            <person name="Finley R.L. Jr."/>
            <person name="Kidd T."/>
            <person name="Wainwright S.M."/>
            <person name="Ingham P.W."/>
            <person name="Brent R."/>
            <person name="Ish-Horowicz D."/>
        </authorList>
    </citation>
    <scope>FUNCTION</scope>
    <scope>BINDING TO HAIRY-RELATED PROTEINS</scope>
    <scope>DEVELOPMENTAL STAGE</scope>
</reference>
<reference key="6">
    <citation type="journal article" date="1996" name="Mol. Cell. Biol.">
        <title>The WRPW motif of the hairy-related basic helix-loop-helix repressor proteins acts as a 4-amino-acid transcription repression and protein-protein interaction domain.</title>
        <authorList>
            <person name="Fisher A.L."/>
            <person name="Ohsako S."/>
            <person name="Caudy M."/>
        </authorList>
    </citation>
    <scope>FUNCTION</scope>
    <scope>INTERACTION WITH HRY</scope>
</reference>
<reference key="7">
    <citation type="journal article" date="2008" name="J. Proteome Res.">
        <title>Phosphoproteome analysis of Drosophila melanogaster embryos.</title>
        <authorList>
            <person name="Zhai B."/>
            <person name="Villen J."/>
            <person name="Beausoleil S.A."/>
            <person name="Mintseris J."/>
            <person name="Gygi S.P."/>
        </authorList>
    </citation>
    <scope>PHOSPHORYLATION [LARGE SCALE ANALYSIS] AT SER-205; SER-207; SER-218; SER-242; SER-258; SER-267; THR-326 AND THR-328</scope>
    <scope>IDENTIFICATION BY MASS SPECTROMETRY</scope>
    <source>
        <tissue>Embryo</tissue>
    </source>
</reference>
<reference key="8">
    <citation type="journal article" date="2012" name="Mol. Cell">
        <title>XIAP monoubiquitylates Groucho/TLE to promote canonical Wnt signaling.</title>
        <authorList>
            <person name="Hanson A.J."/>
            <person name="Wallace H.A."/>
            <person name="Freeman T.J."/>
            <person name="Beauchamp R.D."/>
            <person name="Lee L.A."/>
            <person name="Lee E."/>
        </authorList>
    </citation>
    <scope>UBIQUITINATION BY XIAP/BIRC4</scope>
</reference>
<reference key="9">
    <citation type="journal article" date="2017" name="Mol. Cell">
        <title>Wnt-dependent inactivation of the Groucho/TLE co-repressor by the HECT E3 ubiquitin ligase Hyd/UBR5.</title>
        <authorList>
            <person name="Flack J.E."/>
            <person name="Mieszczanek J."/>
            <person name="Novcic N."/>
            <person name="Bienz M."/>
        </authorList>
    </citation>
    <scope>UBIQUITINATION</scope>
</reference>
<protein>
    <recommendedName>
        <fullName>Protein groucho</fullName>
    </recommendedName>
    <alternativeName>
        <fullName>Enhancer of split m9/10 protein</fullName>
        <shortName>E(spl)m9/10</shortName>
    </alternativeName>
</protein>
<accession>P16371</accession>
<accession>A4V3F6</accession>
<accession>Q0KI08</accession>
<accession>Q7KRZ4</accession>
<accession>Q9V3F7</accession>
<name>GROU_DROME</name>